<evidence type="ECO:0000255" key="1"/>
<evidence type="ECO:0000256" key="2">
    <source>
        <dbReference type="SAM" id="MobiDB-lite"/>
    </source>
</evidence>
<evidence type="ECO:0000269" key="3">
    <source>
    </source>
</evidence>
<evidence type="ECO:0000269" key="4">
    <source>
    </source>
</evidence>
<evidence type="ECO:0000305" key="5"/>
<evidence type="ECO:0000312" key="6">
    <source>
        <dbReference type="EMBL" id="CAA21268.1"/>
    </source>
</evidence>
<protein>
    <recommendedName>
        <fullName>Universal stress protein A family protein C25B2.10</fullName>
    </recommendedName>
</protein>
<accession>O74782</accession>
<reference evidence="6" key="1">
    <citation type="journal article" date="2002" name="Nature">
        <title>The genome sequence of Schizosaccharomyces pombe.</title>
        <authorList>
            <person name="Wood V."/>
            <person name="Gwilliam R."/>
            <person name="Rajandream M.A."/>
            <person name="Lyne M.H."/>
            <person name="Lyne R."/>
            <person name="Stewart A."/>
            <person name="Sgouros J.G."/>
            <person name="Peat N."/>
            <person name="Hayles J."/>
            <person name="Baker S.G."/>
            <person name="Basham D."/>
            <person name="Bowman S."/>
            <person name="Brooks K."/>
            <person name="Brown D."/>
            <person name="Brown S."/>
            <person name="Chillingworth T."/>
            <person name="Churcher C.M."/>
            <person name="Collins M."/>
            <person name="Connor R."/>
            <person name="Cronin A."/>
            <person name="Davis P."/>
            <person name="Feltwell T."/>
            <person name="Fraser A."/>
            <person name="Gentles S."/>
            <person name="Goble A."/>
            <person name="Hamlin N."/>
            <person name="Harris D.E."/>
            <person name="Hidalgo J."/>
            <person name="Hodgson G."/>
            <person name="Holroyd S."/>
            <person name="Hornsby T."/>
            <person name="Howarth S."/>
            <person name="Huckle E.J."/>
            <person name="Hunt S."/>
            <person name="Jagels K."/>
            <person name="James K.D."/>
            <person name="Jones L."/>
            <person name="Jones M."/>
            <person name="Leather S."/>
            <person name="McDonald S."/>
            <person name="McLean J."/>
            <person name="Mooney P."/>
            <person name="Moule S."/>
            <person name="Mungall K.L."/>
            <person name="Murphy L.D."/>
            <person name="Niblett D."/>
            <person name="Odell C."/>
            <person name="Oliver K."/>
            <person name="O'Neil S."/>
            <person name="Pearson D."/>
            <person name="Quail M.A."/>
            <person name="Rabbinowitsch E."/>
            <person name="Rutherford K.M."/>
            <person name="Rutter S."/>
            <person name="Saunders D."/>
            <person name="Seeger K."/>
            <person name="Sharp S."/>
            <person name="Skelton J."/>
            <person name="Simmonds M.N."/>
            <person name="Squares R."/>
            <person name="Squares S."/>
            <person name="Stevens K."/>
            <person name="Taylor K."/>
            <person name="Taylor R.G."/>
            <person name="Tivey A."/>
            <person name="Walsh S.V."/>
            <person name="Warren T."/>
            <person name="Whitehead S."/>
            <person name="Woodward J.R."/>
            <person name="Volckaert G."/>
            <person name="Aert R."/>
            <person name="Robben J."/>
            <person name="Grymonprez B."/>
            <person name="Weltjens I."/>
            <person name="Vanstreels E."/>
            <person name="Rieger M."/>
            <person name="Schaefer M."/>
            <person name="Mueller-Auer S."/>
            <person name="Gabel C."/>
            <person name="Fuchs M."/>
            <person name="Duesterhoeft A."/>
            <person name="Fritzc C."/>
            <person name="Holzer E."/>
            <person name="Moestl D."/>
            <person name="Hilbert H."/>
            <person name="Borzym K."/>
            <person name="Langer I."/>
            <person name="Beck A."/>
            <person name="Lehrach H."/>
            <person name="Reinhardt R."/>
            <person name="Pohl T.M."/>
            <person name="Eger P."/>
            <person name="Zimmermann W."/>
            <person name="Wedler H."/>
            <person name="Wambutt R."/>
            <person name="Purnelle B."/>
            <person name="Goffeau A."/>
            <person name="Cadieu E."/>
            <person name="Dreano S."/>
            <person name="Gloux S."/>
            <person name="Lelaure V."/>
            <person name="Mottier S."/>
            <person name="Galibert F."/>
            <person name="Aves S.J."/>
            <person name="Xiang Z."/>
            <person name="Hunt C."/>
            <person name="Moore K."/>
            <person name="Hurst S.M."/>
            <person name="Lucas M."/>
            <person name="Rochet M."/>
            <person name="Gaillardin C."/>
            <person name="Tallada V.A."/>
            <person name="Garzon A."/>
            <person name="Thode G."/>
            <person name="Daga R.R."/>
            <person name="Cruzado L."/>
            <person name="Jimenez J."/>
            <person name="Sanchez M."/>
            <person name="del Rey F."/>
            <person name="Benito J."/>
            <person name="Dominguez A."/>
            <person name="Revuelta J.L."/>
            <person name="Moreno S."/>
            <person name="Armstrong J."/>
            <person name="Forsburg S.L."/>
            <person name="Cerutti L."/>
            <person name="Lowe T."/>
            <person name="McCombie W.R."/>
            <person name="Paulsen I."/>
            <person name="Potashkin J."/>
            <person name="Shpakovski G.V."/>
            <person name="Ussery D."/>
            <person name="Barrell B.G."/>
            <person name="Nurse P."/>
        </authorList>
    </citation>
    <scope>NUCLEOTIDE SEQUENCE [LARGE SCALE GENOMIC DNA]</scope>
    <source>
        <strain>972 / ATCC 24843</strain>
    </source>
</reference>
<reference evidence="5" key="2">
    <citation type="journal article" date="2006" name="Nat. Biotechnol.">
        <title>ORFeome cloning and global analysis of protein localization in the fission yeast Schizosaccharomyces pombe.</title>
        <authorList>
            <person name="Matsuyama A."/>
            <person name="Arai R."/>
            <person name="Yashiroda Y."/>
            <person name="Shirai A."/>
            <person name="Kamata A."/>
            <person name="Sekido S."/>
            <person name="Kobayashi Y."/>
            <person name="Hashimoto A."/>
            <person name="Hamamoto M."/>
            <person name="Hiraoka Y."/>
            <person name="Horinouchi S."/>
            <person name="Yoshida M."/>
        </authorList>
    </citation>
    <scope>SUBCELLULAR LOCATION [LARGE SCALE ANALYSIS]</scope>
</reference>
<reference key="3">
    <citation type="journal article" date="2008" name="J. Proteome Res.">
        <title>Phosphoproteome analysis of fission yeast.</title>
        <authorList>
            <person name="Wilson-Grady J.T."/>
            <person name="Villen J."/>
            <person name="Gygi S.P."/>
        </authorList>
    </citation>
    <scope>PHOSPHORYLATION [LARGE SCALE ANALYSIS] AT SER-44; THR-48; SER-98 AND SER-102</scope>
    <scope>IDENTIFICATION BY MASS SPECTROMETRY</scope>
</reference>
<comment type="subcellular location">
    <subcellularLocation>
        <location evidence="3">Barrier septum</location>
    </subcellularLocation>
    <subcellularLocation>
        <location evidence="3">Cell tip</location>
    </subcellularLocation>
</comment>
<comment type="similarity">
    <text evidence="1">Belongs to the universal stress protein A family.</text>
</comment>
<name>YGBA_SCHPO</name>
<organism>
    <name type="scientific">Schizosaccharomyces pombe (strain 972 / ATCC 24843)</name>
    <name type="common">Fission yeast</name>
    <dbReference type="NCBI Taxonomy" id="284812"/>
    <lineage>
        <taxon>Eukaryota</taxon>
        <taxon>Fungi</taxon>
        <taxon>Dikarya</taxon>
        <taxon>Ascomycota</taxon>
        <taxon>Taphrinomycotina</taxon>
        <taxon>Schizosaccharomycetes</taxon>
        <taxon>Schizosaccharomycetales</taxon>
        <taxon>Schizosaccharomycetaceae</taxon>
        <taxon>Schizosaccharomyces</taxon>
    </lineage>
</organism>
<keyword id="KW-0597">Phosphoprotein</keyword>
<keyword id="KW-1185">Reference proteome</keyword>
<keyword id="KW-0346">Stress response</keyword>
<feature type="chain" id="PRO_0000312662" description="Universal stress protein A family protein C25B2.10">
    <location>
        <begin position="1"/>
        <end position="307"/>
    </location>
</feature>
<feature type="region of interest" description="Disordered" evidence="2">
    <location>
        <begin position="1"/>
        <end position="63"/>
    </location>
</feature>
<feature type="compositionally biased region" description="Basic and acidic residues" evidence="2">
    <location>
        <begin position="21"/>
        <end position="30"/>
    </location>
</feature>
<feature type="modified residue" description="Phosphoserine" evidence="4">
    <location>
        <position position="44"/>
    </location>
</feature>
<feature type="modified residue" description="Phosphothreonine" evidence="4">
    <location>
        <position position="48"/>
    </location>
</feature>
<feature type="modified residue" description="Phosphoserine" evidence="4">
    <location>
        <position position="98"/>
    </location>
</feature>
<feature type="modified residue" description="Phosphoserine" evidence="4">
    <location>
        <position position="102"/>
    </location>
</feature>
<dbReference type="EMBL" id="CU329671">
    <property type="protein sequence ID" value="CAA21268.1"/>
    <property type="molecule type" value="Genomic_DNA"/>
</dbReference>
<dbReference type="PIR" id="T39986">
    <property type="entry name" value="T39986"/>
</dbReference>
<dbReference type="RefSeq" id="NP_596078.1">
    <property type="nucleotide sequence ID" value="NM_001021990.2"/>
</dbReference>
<dbReference type="SMR" id="O74782"/>
<dbReference type="BioGRID" id="277157">
    <property type="interactions" value="31"/>
</dbReference>
<dbReference type="STRING" id="284812.O74782"/>
<dbReference type="iPTMnet" id="O74782"/>
<dbReference type="PaxDb" id="4896-SPBC25B2.10.1"/>
<dbReference type="EnsemblFungi" id="SPBC25B2.10.1">
    <property type="protein sequence ID" value="SPBC25B2.10.1:pep"/>
    <property type="gene ID" value="SPBC25B2.10"/>
</dbReference>
<dbReference type="KEGG" id="spo:2540631"/>
<dbReference type="PomBase" id="SPBC25B2.10"/>
<dbReference type="VEuPathDB" id="FungiDB:SPBC25B2.10"/>
<dbReference type="eggNOG" id="ENOG502RYEB">
    <property type="taxonomic scope" value="Eukaryota"/>
</dbReference>
<dbReference type="HOGENOM" id="CLU_060788_1_0_1"/>
<dbReference type="InParanoid" id="O74782"/>
<dbReference type="OMA" id="KCVEYDP"/>
<dbReference type="PhylomeDB" id="O74782"/>
<dbReference type="PRO" id="PR:O74782"/>
<dbReference type="Proteomes" id="UP000002485">
    <property type="component" value="Chromosome II"/>
</dbReference>
<dbReference type="GO" id="GO:0005938">
    <property type="term" value="C:cell cortex"/>
    <property type="evidence" value="ECO:0000303"/>
    <property type="project" value="PomBase"/>
</dbReference>
<dbReference type="GO" id="GO:0032153">
    <property type="term" value="C:cell division site"/>
    <property type="evidence" value="ECO:0007005"/>
    <property type="project" value="PomBase"/>
</dbReference>
<dbReference type="GO" id="GO:0051286">
    <property type="term" value="C:cell tip"/>
    <property type="evidence" value="ECO:0007005"/>
    <property type="project" value="PomBase"/>
</dbReference>
<dbReference type="GO" id="GO:0000935">
    <property type="term" value="C:division septum"/>
    <property type="evidence" value="ECO:0007669"/>
    <property type="project" value="UniProtKB-SubCell"/>
</dbReference>
<dbReference type="GO" id="GO:0003824">
    <property type="term" value="F:catalytic activity"/>
    <property type="evidence" value="ECO:0000255"/>
    <property type="project" value="PomBase"/>
</dbReference>
<dbReference type="CDD" id="cd23659">
    <property type="entry name" value="USP_At3g01520-like"/>
    <property type="match status" value="1"/>
</dbReference>
<dbReference type="Gene3D" id="3.40.50.620">
    <property type="entry name" value="HUPs"/>
    <property type="match status" value="1"/>
</dbReference>
<dbReference type="InterPro" id="IPR014729">
    <property type="entry name" value="Rossmann-like_a/b/a_fold"/>
</dbReference>
<dbReference type="InterPro" id="IPR006016">
    <property type="entry name" value="UspA"/>
</dbReference>
<dbReference type="PANTHER" id="PTHR47815">
    <property type="entry name" value="UNIVERSAL STRESS PROTEIN A FAMILY PROTEIN C25B2.10"/>
    <property type="match status" value="1"/>
</dbReference>
<dbReference type="PANTHER" id="PTHR47815:SF1">
    <property type="entry name" value="UNIVERSAL STRESS PROTEIN A FAMILY PROTEIN C25B2.10"/>
    <property type="match status" value="1"/>
</dbReference>
<dbReference type="Pfam" id="PF00582">
    <property type="entry name" value="Usp"/>
    <property type="match status" value="1"/>
</dbReference>
<dbReference type="SUPFAM" id="SSF52402">
    <property type="entry name" value="Adenine nucleotide alpha hydrolases-like"/>
    <property type="match status" value="1"/>
</dbReference>
<sequence length="307" mass="34082">MSESAPAGSKEGVSFGNLPRPEPRTSKDQQKLSISTDVKKPSHSAPVTPVRSARSSMEQPTFRPVAKNSVTVAPARAAGFCPPQFEEYHHGRSHSLVSPPPSPHFLKRISFDTFNNKAATDFSLTLKTQHQAYKWTRTSRTFLCGMDGNSYSEVAVDWLFETLLADNDEAVVLRVIDPSSKLAEDLSDEQSYRSLAEHIMAGILKKVDDDKAVSIIVELVVGKPQDMILRTIHVYSPDSLIVGTRGKALNSFQSLLSSGSVSKFCLQKSPIPVIVVRPDRKRVRSKNKRLKDKTRKSYMEILEKSGR</sequence>
<proteinExistence type="evidence at protein level"/>
<gene>
    <name type="ORF">SPBC25B2.10</name>
</gene>